<reference key="1">
    <citation type="journal article" date="2008" name="J. Bacteriol.">
        <title>Genome sequence of the streptomycin-producing microorganism Streptomyces griseus IFO 13350.</title>
        <authorList>
            <person name="Ohnishi Y."/>
            <person name="Ishikawa J."/>
            <person name="Hara H."/>
            <person name="Suzuki H."/>
            <person name="Ikenoya M."/>
            <person name="Ikeda H."/>
            <person name="Yamashita A."/>
            <person name="Hattori M."/>
            <person name="Horinouchi S."/>
        </authorList>
    </citation>
    <scope>NUCLEOTIDE SEQUENCE [LARGE SCALE GENOMIC DNA]</scope>
    <source>
        <strain>JCM 4626 / CBS 651.72 / NBRC 13350 / KCC S-0626 / ISP 5235</strain>
    </source>
</reference>
<sequence length="126" mass="14245">MARVSGVDIPREKRVEVALTYVFGIGRTRSKEILASTGVNPNTRVRDLAEEDLVKIREHVDANLRTEGDLRREVQANIRRKVEIGCYQGIRHRRGLPVHGQRTSTNARTRKGPRRAIAGKKKPGKK</sequence>
<accession>B1W3Y2</accession>
<proteinExistence type="inferred from homology"/>
<name>RS13_STRGG</name>
<protein>
    <recommendedName>
        <fullName evidence="1">Small ribosomal subunit protein uS13</fullName>
    </recommendedName>
    <alternativeName>
        <fullName evidence="3">30S ribosomal protein S13</fullName>
    </alternativeName>
</protein>
<feature type="chain" id="PRO_1000141313" description="Small ribosomal subunit protein uS13">
    <location>
        <begin position="1"/>
        <end position="126"/>
    </location>
</feature>
<feature type="region of interest" description="Disordered" evidence="2">
    <location>
        <begin position="94"/>
        <end position="126"/>
    </location>
</feature>
<feature type="compositionally biased region" description="Basic residues" evidence="2">
    <location>
        <begin position="108"/>
        <end position="126"/>
    </location>
</feature>
<comment type="function">
    <text evidence="1">Located at the top of the head of the 30S subunit, it contacts several helices of the 16S rRNA. In the 70S ribosome it contacts the 23S rRNA (bridge B1a) and protein L5 of the 50S subunit (bridge B1b), connecting the 2 subunits; these bridges are implicated in subunit movement. Contacts the tRNAs in the A and P-sites.</text>
</comment>
<comment type="subunit">
    <text evidence="1">Part of the 30S ribosomal subunit. Forms a loose heterodimer with protein S19. Forms two bridges to the 50S subunit in the 70S ribosome.</text>
</comment>
<comment type="similarity">
    <text evidence="1">Belongs to the universal ribosomal protein uS13 family.</text>
</comment>
<keyword id="KW-0687">Ribonucleoprotein</keyword>
<keyword id="KW-0689">Ribosomal protein</keyword>
<keyword id="KW-0694">RNA-binding</keyword>
<keyword id="KW-0699">rRNA-binding</keyword>
<keyword id="KW-0820">tRNA-binding</keyword>
<evidence type="ECO:0000255" key="1">
    <source>
        <dbReference type="HAMAP-Rule" id="MF_01315"/>
    </source>
</evidence>
<evidence type="ECO:0000256" key="2">
    <source>
        <dbReference type="SAM" id="MobiDB-lite"/>
    </source>
</evidence>
<evidence type="ECO:0000305" key="3"/>
<organism>
    <name type="scientific">Streptomyces griseus subsp. griseus (strain JCM 4626 / CBS 651.72 / NBRC 13350 / KCC S-0626 / ISP 5235)</name>
    <dbReference type="NCBI Taxonomy" id="455632"/>
    <lineage>
        <taxon>Bacteria</taxon>
        <taxon>Bacillati</taxon>
        <taxon>Actinomycetota</taxon>
        <taxon>Actinomycetes</taxon>
        <taxon>Kitasatosporales</taxon>
        <taxon>Streptomycetaceae</taxon>
        <taxon>Streptomyces</taxon>
    </lineage>
</organism>
<dbReference type="EMBL" id="AP009493">
    <property type="protein sequence ID" value="BAG19638.1"/>
    <property type="molecule type" value="Genomic_DNA"/>
</dbReference>
<dbReference type="RefSeq" id="WP_003966938.1">
    <property type="nucleotide sequence ID" value="NC_010572.1"/>
</dbReference>
<dbReference type="SMR" id="B1W3Y2"/>
<dbReference type="GeneID" id="95484859"/>
<dbReference type="KEGG" id="sgr:SGR_2809"/>
<dbReference type="eggNOG" id="COG0099">
    <property type="taxonomic scope" value="Bacteria"/>
</dbReference>
<dbReference type="HOGENOM" id="CLU_103849_1_2_11"/>
<dbReference type="Proteomes" id="UP000001685">
    <property type="component" value="Chromosome"/>
</dbReference>
<dbReference type="GO" id="GO:0005829">
    <property type="term" value="C:cytosol"/>
    <property type="evidence" value="ECO:0007669"/>
    <property type="project" value="TreeGrafter"/>
</dbReference>
<dbReference type="GO" id="GO:0015935">
    <property type="term" value="C:small ribosomal subunit"/>
    <property type="evidence" value="ECO:0007669"/>
    <property type="project" value="TreeGrafter"/>
</dbReference>
<dbReference type="GO" id="GO:0019843">
    <property type="term" value="F:rRNA binding"/>
    <property type="evidence" value="ECO:0007669"/>
    <property type="project" value="UniProtKB-UniRule"/>
</dbReference>
<dbReference type="GO" id="GO:0003735">
    <property type="term" value="F:structural constituent of ribosome"/>
    <property type="evidence" value="ECO:0007669"/>
    <property type="project" value="InterPro"/>
</dbReference>
<dbReference type="GO" id="GO:0000049">
    <property type="term" value="F:tRNA binding"/>
    <property type="evidence" value="ECO:0007669"/>
    <property type="project" value="UniProtKB-UniRule"/>
</dbReference>
<dbReference type="GO" id="GO:0006412">
    <property type="term" value="P:translation"/>
    <property type="evidence" value="ECO:0007669"/>
    <property type="project" value="UniProtKB-UniRule"/>
</dbReference>
<dbReference type="FunFam" id="1.10.8.50:FF:000001">
    <property type="entry name" value="30S ribosomal protein S13"/>
    <property type="match status" value="1"/>
</dbReference>
<dbReference type="FunFam" id="4.10.910.10:FF:000001">
    <property type="entry name" value="30S ribosomal protein S13"/>
    <property type="match status" value="1"/>
</dbReference>
<dbReference type="Gene3D" id="1.10.8.50">
    <property type="match status" value="1"/>
</dbReference>
<dbReference type="Gene3D" id="4.10.910.10">
    <property type="entry name" value="30s ribosomal protein s13, domain 2"/>
    <property type="match status" value="1"/>
</dbReference>
<dbReference type="HAMAP" id="MF_01315">
    <property type="entry name" value="Ribosomal_uS13"/>
    <property type="match status" value="1"/>
</dbReference>
<dbReference type="InterPro" id="IPR027437">
    <property type="entry name" value="Rbsml_uS13_C"/>
</dbReference>
<dbReference type="InterPro" id="IPR001892">
    <property type="entry name" value="Ribosomal_uS13"/>
</dbReference>
<dbReference type="InterPro" id="IPR010979">
    <property type="entry name" value="Ribosomal_uS13-like_H2TH"/>
</dbReference>
<dbReference type="InterPro" id="IPR019980">
    <property type="entry name" value="Ribosomal_uS13_bac-type"/>
</dbReference>
<dbReference type="InterPro" id="IPR018269">
    <property type="entry name" value="Ribosomal_uS13_CS"/>
</dbReference>
<dbReference type="NCBIfam" id="TIGR03631">
    <property type="entry name" value="uS13_bact"/>
    <property type="match status" value="1"/>
</dbReference>
<dbReference type="PANTHER" id="PTHR10871">
    <property type="entry name" value="30S RIBOSOMAL PROTEIN S13/40S RIBOSOMAL PROTEIN S18"/>
    <property type="match status" value="1"/>
</dbReference>
<dbReference type="PANTHER" id="PTHR10871:SF1">
    <property type="entry name" value="SMALL RIBOSOMAL SUBUNIT PROTEIN US13M"/>
    <property type="match status" value="1"/>
</dbReference>
<dbReference type="Pfam" id="PF00416">
    <property type="entry name" value="Ribosomal_S13"/>
    <property type="match status" value="1"/>
</dbReference>
<dbReference type="PIRSF" id="PIRSF002134">
    <property type="entry name" value="Ribosomal_S13"/>
    <property type="match status" value="1"/>
</dbReference>
<dbReference type="SUPFAM" id="SSF46946">
    <property type="entry name" value="S13-like H2TH domain"/>
    <property type="match status" value="1"/>
</dbReference>
<dbReference type="PROSITE" id="PS00646">
    <property type="entry name" value="RIBOSOMAL_S13_1"/>
    <property type="match status" value="1"/>
</dbReference>
<dbReference type="PROSITE" id="PS50159">
    <property type="entry name" value="RIBOSOMAL_S13_2"/>
    <property type="match status" value="1"/>
</dbReference>
<gene>
    <name evidence="1" type="primary">rpsM</name>
    <name type="ordered locus">SGR_2809</name>
</gene>